<comment type="function">
    <text evidence="1">Component of the Mediator complex, a coactivator involved in the regulated transcription of nearly all RNA polymerase II-dependent genes. Mediator functions as a bridge to convey information from gene-specific regulatory proteins to the basal RNA polymerase II transcription machinery. Mediator is recruited to promoters by direct interactions with regulatory proteins and serves as a scaffold for the assembly of a functional preinitiation complex with RNA polymerase II and the general transcription factors (By similarity).</text>
</comment>
<comment type="subunit">
    <text evidence="1">Component of the Mediator complex.</text>
</comment>
<comment type="subcellular location">
    <subcellularLocation>
        <location evidence="1">Nucleus</location>
    </subcellularLocation>
</comment>
<comment type="similarity">
    <text evidence="3">Belongs to the Mediator complex subunit 15 family.</text>
</comment>
<keyword id="KW-0010">Activator</keyword>
<keyword id="KW-0539">Nucleus</keyword>
<keyword id="KW-1185">Reference proteome</keyword>
<keyword id="KW-0804">Transcription</keyword>
<keyword id="KW-0805">Transcription regulation</keyword>
<name>MED15_AEDAE</name>
<accession>Q17BA4</accession>
<gene>
    <name type="primary">MED15</name>
    <name type="ORF">AAEL005022</name>
</gene>
<organism>
    <name type="scientific">Aedes aegypti</name>
    <name type="common">Yellowfever mosquito</name>
    <name type="synonym">Culex aegypti</name>
    <dbReference type="NCBI Taxonomy" id="7159"/>
    <lineage>
        <taxon>Eukaryota</taxon>
        <taxon>Metazoa</taxon>
        <taxon>Ecdysozoa</taxon>
        <taxon>Arthropoda</taxon>
        <taxon>Hexapoda</taxon>
        <taxon>Insecta</taxon>
        <taxon>Pterygota</taxon>
        <taxon>Neoptera</taxon>
        <taxon>Endopterygota</taxon>
        <taxon>Diptera</taxon>
        <taxon>Nematocera</taxon>
        <taxon>Culicoidea</taxon>
        <taxon>Culicidae</taxon>
        <taxon>Culicinae</taxon>
        <taxon>Aedini</taxon>
        <taxon>Aedes</taxon>
        <taxon>Stegomyia</taxon>
    </lineage>
</organism>
<dbReference type="EMBL" id="CH477324">
    <property type="protein sequence ID" value="EAT43542.1"/>
    <property type="molecule type" value="Genomic_DNA"/>
</dbReference>
<dbReference type="RefSeq" id="XP_001650211.1">
    <property type="nucleotide sequence ID" value="XM_001650161.1"/>
</dbReference>
<dbReference type="SMR" id="Q17BA4"/>
<dbReference type="FunCoup" id="Q17BA4">
    <property type="interactions" value="1740"/>
</dbReference>
<dbReference type="STRING" id="7159.Q17BA4"/>
<dbReference type="PaxDb" id="7159-AAEL005022-PA"/>
<dbReference type="EnsemblMetazoa" id="AAEL005022-RA">
    <property type="protein sequence ID" value="AAEL005022-PA"/>
    <property type="gene ID" value="AAEL005022"/>
</dbReference>
<dbReference type="EnsemblMetazoa" id="AAEL005022-RB">
    <property type="protein sequence ID" value="AAEL005022-PB"/>
    <property type="gene ID" value="AAEL005022"/>
</dbReference>
<dbReference type="VEuPathDB" id="VectorBase:AAEL005022"/>
<dbReference type="eggNOG" id="KOG4274">
    <property type="taxonomic scope" value="Eukaryota"/>
</dbReference>
<dbReference type="HOGENOM" id="CLU_011336_0_0_1"/>
<dbReference type="InParanoid" id="Q17BA4"/>
<dbReference type="OMA" id="GPVPNQM"/>
<dbReference type="OrthoDB" id="10055322at2759"/>
<dbReference type="PhylomeDB" id="Q17BA4"/>
<dbReference type="Proteomes" id="UP000008820">
    <property type="component" value="Chromosome 2"/>
</dbReference>
<dbReference type="Proteomes" id="UP000682892">
    <property type="component" value="Unassembled WGS sequence"/>
</dbReference>
<dbReference type="GO" id="GO:0005634">
    <property type="term" value="C:nucleus"/>
    <property type="evidence" value="ECO:0007669"/>
    <property type="project" value="UniProtKB-SubCell"/>
</dbReference>
<dbReference type="GO" id="GO:0003712">
    <property type="term" value="F:transcription coregulator activity"/>
    <property type="evidence" value="ECO:0007669"/>
    <property type="project" value="InterPro"/>
</dbReference>
<dbReference type="GO" id="GO:0006355">
    <property type="term" value="P:regulation of DNA-templated transcription"/>
    <property type="evidence" value="ECO:0007669"/>
    <property type="project" value="InterPro"/>
</dbReference>
<dbReference type="FunFam" id="1.10.246.20:FF:000002">
    <property type="entry name" value="Mediator of RNA polymerase II transcription subunit 15"/>
    <property type="match status" value="1"/>
</dbReference>
<dbReference type="Gene3D" id="1.10.246.20">
    <property type="entry name" value="Coactivator CBP, KIX domain"/>
    <property type="match status" value="1"/>
</dbReference>
<dbReference type="InterPro" id="IPR036529">
    <property type="entry name" value="KIX_dom_sf"/>
</dbReference>
<dbReference type="InterPro" id="IPR048386">
    <property type="entry name" value="Med15_C"/>
</dbReference>
<dbReference type="InterPro" id="IPR048385">
    <property type="entry name" value="Med15_central"/>
</dbReference>
<dbReference type="InterPro" id="IPR019087">
    <property type="entry name" value="Med15_N"/>
</dbReference>
<dbReference type="PANTHER" id="PTHR31804">
    <property type="entry name" value="MEDIATOR OF RNA POLYMERASE II TRANSCRIPTION SUBUNIT 15"/>
    <property type="match status" value="1"/>
</dbReference>
<dbReference type="PANTHER" id="PTHR31804:SF3">
    <property type="entry name" value="MEDIATOR OF RNA POLYMERASE II TRANSCRIPTION SUBUNIT 15"/>
    <property type="match status" value="1"/>
</dbReference>
<dbReference type="Pfam" id="PF21539">
    <property type="entry name" value="Med15_C"/>
    <property type="match status" value="1"/>
</dbReference>
<dbReference type="Pfam" id="PF21538">
    <property type="entry name" value="Med15_M"/>
    <property type="match status" value="1"/>
</dbReference>
<dbReference type="Pfam" id="PF09606">
    <property type="entry name" value="Med15_N"/>
    <property type="match status" value="1"/>
</dbReference>
<protein>
    <recommendedName>
        <fullName>Mediator of RNA polymerase II transcription subunit 15</fullName>
    </recommendedName>
    <alternativeName>
        <fullName>Mediator complex subunit 15</fullName>
    </alternativeName>
</protein>
<proteinExistence type="inferred from homology"/>
<sequence>MAEDNSWKTPSFRQSVVNKINEAIQQSGMTSSKNGLEMENHVFQKARNKDEYLGYVARLILHVREMNTKNKNQQNPAGGSQDGGNPNQQGGMPDPINALQTLATQGTRPQMMGGQMGPGGPMGNQMGGGNASNLLNTLNRPQMPMTGGMANMQGRVGTMGGPNQMGGMMPGQMPQGMPGMPNQMGGAMGPGGMSGGKIVGQMNPMGQMNPMQMGVSGMPQGAGQQQPQQPQGQQGGPGGPNQMNPMGGMGMQVNPGGHMNQNAINQQMNQVGMSSGGNQMGNLGGNSPMNPGNMGIAPNQVIRQQMPPGMNPNQQQLGMAGGQMNQMNQGVGGPGGNLGPVQQQQQPGQVGMAGMGPGGPGNLQQQNNPQQQSQGGPNAAPGQMNQVGGPGGNMQAMGNQGNFVPIGANPMVRKQDMMSGGQVYPGGVVRSVTPNQFLRQSPSPSVPSPAGPGSIGPQSHPGQMIPSPALIPSPSPQVSSNIPAPRNIGQSPGQSLNTPGQAAAPSPLNPQEEHLYKEKYRSLQKYIEPLKRMIAKMEHDDVDKMGKMKRLLDILCNPTCRIPLETLYKCEAALTSQLGTIREPPLNNPLVEAVSANLQSPLGNHTLQRTFRPCLEALFGPDIKNLPTPAKQPRLAIDEPSTSGSTGSQEIPHILQGEIARLDQKFKVSLDPCAIGDTKTIKLICWLDDKHLPCVPPVAVTIPEEYPFTSPSCSLIEQEYNATPFLIQVQKSFLARICKLPEMFSLSHLLDTWEMSVRQACSPNPSLVAPSATSVLLGM</sequence>
<reference key="1">
    <citation type="journal article" date="2007" name="Science">
        <title>Genome sequence of Aedes aegypti, a major arbovirus vector.</title>
        <authorList>
            <person name="Nene V."/>
            <person name="Wortman J.R."/>
            <person name="Lawson D."/>
            <person name="Haas B.J."/>
            <person name="Kodira C.D."/>
            <person name="Tu Z.J."/>
            <person name="Loftus B.J."/>
            <person name="Xi Z."/>
            <person name="Megy K."/>
            <person name="Grabherr M."/>
            <person name="Ren Q."/>
            <person name="Zdobnov E.M."/>
            <person name="Lobo N.F."/>
            <person name="Campbell K.S."/>
            <person name="Brown S.E."/>
            <person name="Bonaldo M.F."/>
            <person name="Zhu J."/>
            <person name="Sinkins S.P."/>
            <person name="Hogenkamp D.G."/>
            <person name="Amedeo P."/>
            <person name="Arensburger P."/>
            <person name="Atkinson P.W."/>
            <person name="Bidwell S.L."/>
            <person name="Biedler J."/>
            <person name="Birney E."/>
            <person name="Bruggner R.V."/>
            <person name="Costas J."/>
            <person name="Coy M.R."/>
            <person name="Crabtree J."/>
            <person name="Crawford M."/>
            <person name="DeBruyn B."/>
            <person name="DeCaprio D."/>
            <person name="Eiglmeier K."/>
            <person name="Eisenstadt E."/>
            <person name="El-Dorry H."/>
            <person name="Gelbart W.M."/>
            <person name="Gomes S.L."/>
            <person name="Hammond M."/>
            <person name="Hannick L.I."/>
            <person name="Hogan J.R."/>
            <person name="Holmes M.H."/>
            <person name="Jaffe D."/>
            <person name="Johnston S.J."/>
            <person name="Kennedy R.C."/>
            <person name="Koo H."/>
            <person name="Kravitz S."/>
            <person name="Kriventseva E.V."/>
            <person name="Kulp D."/>
            <person name="Labutti K."/>
            <person name="Lee E."/>
            <person name="Li S."/>
            <person name="Lovin D.D."/>
            <person name="Mao C."/>
            <person name="Mauceli E."/>
            <person name="Menck C.F."/>
            <person name="Miller J.R."/>
            <person name="Montgomery P."/>
            <person name="Mori A."/>
            <person name="Nascimento A.L."/>
            <person name="Naveira H.F."/>
            <person name="Nusbaum C."/>
            <person name="O'Leary S.B."/>
            <person name="Orvis J."/>
            <person name="Pertea M."/>
            <person name="Quesneville H."/>
            <person name="Reidenbach K.R."/>
            <person name="Rogers Y.-H.C."/>
            <person name="Roth C.W."/>
            <person name="Schneider J.R."/>
            <person name="Schatz M."/>
            <person name="Shumway M."/>
            <person name="Stanke M."/>
            <person name="Stinson E.O."/>
            <person name="Tubio J.M.C."/>
            <person name="Vanzee J.P."/>
            <person name="Verjovski-Almeida S."/>
            <person name="Werner D."/>
            <person name="White O.R."/>
            <person name="Wyder S."/>
            <person name="Zeng Q."/>
            <person name="Zhao Q."/>
            <person name="Zhao Y."/>
            <person name="Hill C.A."/>
            <person name="Raikhel A.S."/>
            <person name="Soares M.B."/>
            <person name="Knudson D.L."/>
            <person name="Lee N.H."/>
            <person name="Galagan J."/>
            <person name="Salzberg S.L."/>
            <person name="Paulsen I.T."/>
            <person name="Dimopoulos G."/>
            <person name="Collins F.H."/>
            <person name="Bruce B."/>
            <person name="Fraser-Liggett C.M."/>
            <person name="Severson D.W."/>
        </authorList>
    </citation>
    <scope>NUCLEOTIDE SEQUENCE [LARGE SCALE GENOMIC DNA]</scope>
    <source>
        <strain>LVPib12</strain>
    </source>
</reference>
<feature type="chain" id="PRO_0000304666" description="Mediator of RNA polymerase II transcription subunit 15">
    <location>
        <begin position="1"/>
        <end position="779"/>
    </location>
</feature>
<feature type="region of interest" description="Disordered" evidence="2">
    <location>
        <begin position="70"/>
        <end position="131"/>
    </location>
</feature>
<feature type="region of interest" description="Disordered" evidence="2">
    <location>
        <begin position="209"/>
        <end position="407"/>
    </location>
</feature>
<feature type="region of interest" description="Disordered" evidence="2">
    <location>
        <begin position="437"/>
        <end position="512"/>
    </location>
</feature>
<feature type="region of interest" description="Disordered" evidence="2">
    <location>
        <begin position="629"/>
        <end position="649"/>
    </location>
</feature>
<feature type="compositionally biased region" description="Polar residues" evidence="2">
    <location>
        <begin position="70"/>
        <end position="90"/>
    </location>
</feature>
<feature type="compositionally biased region" description="Polar residues" evidence="2">
    <location>
        <begin position="98"/>
        <end position="108"/>
    </location>
</feature>
<feature type="compositionally biased region" description="Gly residues" evidence="2">
    <location>
        <begin position="114"/>
        <end position="130"/>
    </location>
</feature>
<feature type="compositionally biased region" description="Low complexity" evidence="2">
    <location>
        <begin position="209"/>
        <end position="232"/>
    </location>
</feature>
<feature type="compositionally biased region" description="Low complexity" evidence="2">
    <location>
        <begin position="240"/>
        <end position="270"/>
    </location>
</feature>
<feature type="compositionally biased region" description="Gly residues" evidence="2">
    <location>
        <begin position="274"/>
        <end position="284"/>
    </location>
</feature>
<feature type="compositionally biased region" description="Low complexity" evidence="2">
    <location>
        <begin position="285"/>
        <end position="295"/>
    </location>
</feature>
<feature type="compositionally biased region" description="Low complexity" evidence="2">
    <location>
        <begin position="304"/>
        <end position="329"/>
    </location>
</feature>
<feature type="compositionally biased region" description="Low complexity" evidence="2">
    <location>
        <begin position="339"/>
        <end position="350"/>
    </location>
</feature>
<feature type="compositionally biased region" description="Gly residues" evidence="2">
    <location>
        <begin position="351"/>
        <end position="361"/>
    </location>
</feature>
<feature type="compositionally biased region" description="Low complexity" evidence="2">
    <location>
        <begin position="362"/>
        <end position="383"/>
    </location>
</feature>
<feature type="compositionally biased region" description="Low complexity" evidence="2">
    <location>
        <begin position="393"/>
        <end position="402"/>
    </location>
</feature>
<feature type="compositionally biased region" description="Low complexity" evidence="2">
    <location>
        <begin position="451"/>
        <end position="468"/>
    </location>
</feature>
<feature type="compositionally biased region" description="Polar residues" evidence="2">
    <location>
        <begin position="477"/>
        <end position="500"/>
    </location>
</feature>
<feature type="compositionally biased region" description="Polar residues" evidence="2">
    <location>
        <begin position="640"/>
        <end position="649"/>
    </location>
</feature>
<evidence type="ECO:0000250" key="1"/>
<evidence type="ECO:0000256" key="2">
    <source>
        <dbReference type="SAM" id="MobiDB-lite"/>
    </source>
</evidence>
<evidence type="ECO:0000305" key="3"/>